<name>NUOH_PSEFS</name>
<gene>
    <name evidence="1" type="primary">nuoH</name>
    <name type="ordered locus">PFLU_3824</name>
</gene>
<dbReference type="EC" id="7.1.1.-" evidence="1"/>
<dbReference type="EMBL" id="AM181176">
    <property type="protein sequence ID" value="CAY50144.1"/>
    <property type="molecule type" value="Genomic_DNA"/>
</dbReference>
<dbReference type="RefSeq" id="WP_012724954.1">
    <property type="nucleotide sequence ID" value="NC_012660.1"/>
</dbReference>
<dbReference type="SMR" id="C3JY87"/>
<dbReference type="STRING" id="294.SRM1_03451"/>
<dbReference type="GeneID" id="93500856"/>
<dbReference type="eggNOG" id="COG1005">
    <property type="taxonomic scope" value="Bacteria"/>
</dbReference>
<dbReference type="HOGENOM" id="CLU_015134_0_1_6"/>
<dbReference type="OrthoDB" id="9803734at2"/>
<dbReference type="GO" id="GO:0005886">
    <property type="term" value="C:plasma membrane"/>
    <property type="evidence" value="ECO:0007669"/>
    <property type="project" value="UniProtKB-SubCell"/>
</dbReference>
<dbReference type="GO" id="GO:0003954">
    <property type="term" value="F:NADH dehydrogenase activity"/>
    <property type="evidence" value="ECO:0007669"/>
    <property type="project" value="TreeGrafter"/>
</dbReference>
<dbReference type="GO" id="GO:0016655">
    <property type="term" value="F:oxidoreductase activity, acting on NAD(P)H, quinone or similar compound as acceptor"/>
    <property type="evidence" value="ECO:0007669"/>
    <property type="project" value="UniProtKB-UniRule"/>
</dbReference>
<dbReference type="GO" id="GO:0048038">
    <property type="term" value="F:quinone binding"/>
    <property type="evidence" value="ECO:0007669"/>
    <property type="project" value="UniProtKB-KW"/>
</dbReference>
<dbReference type="GO" id="GO:0009060">
    <property type="term" value="P:aerobic respiration"/>
    <property type="evidence" value="ECO:0007669"/>
    <property type="project" value="TreeGrafter"/>
</dbReference>
<dbReference type="HAMAP" id="MF_01350">
    <property type="entry name" value="NDH1_NuoH"/>
    <property type="match status" value="1"/>
</dbReference>
<dbReference type="InterPro" id="IPR001694">
    <property type="entry name" value="NADH_UbQ_OxRdtase_su1/FPO"/>
</dbReference>
<dbReference type="InterPro" id="IPR018086">
    <property type="entry name" value="NADH_UbQ_OxRdtase_su1_CS"/>
</dbReference>
<dbReference type="NCBIfam" id="NF004740">
    <property type="entry name" value="PRK06076.1-1"/>
    <property type="match status" value="1"/>
</dbReference>
<dbReference type="NCBIfam" id="NF004741">
    <property type="entry name" value="PRK06076.1-2"/>
    <property type="match status" value="1"/>
</dbReference>
<dbReference type="PANTHER" id="PTHR11432">
    <property type="entry name" value="NADH DEHYDROGENASE SUBUNIT 1"/>
    <property type="match status" value="1"/>
</dbReference>
<dbReference type="PANTHER" id="PTHR11432:SF3">
    <property type="entry name" value="NADH-UBIQUINONE OXIDOREDUCTASE CHAIN 1"/>
    <property type="match status" value="1"/>
</dbReference>
<dbReference type="Pfam" id="PF00146">
    <property type="entry name" value="NADHdh"/>
    <property type="match status" value="1"/>
</dbReference>
<dbReference type="PROSITE" id="PS00667">
    <property type="entry name" value="COMPLEX1_ND1_1"/>
    <property type="match status" value="1"/>
</dbReference>
<dbReference type="PROSITE" id="PS00668">
    <property type="entry name" value="COMPLEX1_ND1_2"/>
    <property type="match status" value="1"/>
</dbReference>
<organism>
    <name type="scientific">Pseudomonas fluorescens (strain SBW25)</name>
    <dbReference type="NCBI Taxonomy" id="216595"/>
    <lineage>
        <taxon>Bacteria</taxon>
        <taxon>Pseudomonadati</taxon>
        <taxon>Pseudomonadota</taxon>
        <taxon>Gammaproteobacteria</taxon>
        <taxon>Pseudomonadales</taxon>
        <taxon>Pseudomonadaceae</taxon>
        <taxon>Pseudomonas</taxon>
    </lineage>
</organism>
<accession>C3JY87</accession>
<proteinExistence type="inferred from homology"/>
<sequence>MTWFTPEVIDVIISVVKAIVILLAVVVAGALLSFVERRLLGWWQDRYGPNRVGPFGMFQIAADMLKMFFKEDWTPPFADKVIFTLAPVVAMSALLIAFAVIPITPTWGVADLNIGLLFFFAMAGLSVYAVLFAGWSSNNKFALLGSLRASAQTVSYEVFMGLALMGIVVQVGSFNMRDIVEYQAQNLWFIIPQFFGFCTFFIAGVAVTHRHPFDQPEAEQELADGYHIEYAGMKWGMFFVGEYIGIILISALLVTLFFGGWHGPFGILPQLAFFWFFLKTAFFIMLFILLRASIPRPRYDQVMDFSWRFCLPLTLINLLVTAAVVLLNTPAAAVQ</sequence>
<feature type="chain" id="PRO_1000214843" description="NADH-quinone oxidoreductase subunit H">
    <location>
        <begin position="1"/>
        <end position="335"/>
    </location>
</feature>
<feature type="transmembrane region" description="Helical" evidence="1">
    <location>
        <begin position="11"/>
        <end position="31"/>
    </location>
</feature>
<feature type="transmembrane region" description="Helical" evidence="1">
    <location>
        <begin position="81"/>
        <end position="101"/>
    </location>
</feature>
<feature type="transmembrane region" description="Helical" evidence="1">
    <location>
        <begin position="114"/>
        <end position="134"/>
    </location>
</feature>
<feature type="transmembrane region" description="Helical" evidence="1">
    <location>
        <begin position="154"/>
        <end position="174"/>
    </location>
</feature>
<feature type="transmembrane region" description="Helical" evidence="1">
    <location>
        <begin position="187"/>
        <end position="207"/>
    </location>
</feature>
<feature type="transmembrane region" description="Helical" evidence="1">
    <location>
        <begin position="238"/>
        <end position="258"/>
    </location>
</feature>
<feature type="transmembrane region" description="Helical" evidence="1">
    <location>
        <begin position="270"/>
        <end position="290"/>
    </location>
</feature>
<feature type="transmembrane region" description="Helical" evidence="1">
    <location>
        <begin position="309"/>
        <end position="329"/>
    </location>
</feature>
<reference key="1">
    <citation type="journal article" date="2009" name="Genome Biol.">
        <title>Genomic and genetic analyses of diversity and plant interactions of Pseudomonas fluorescens.</title>
        <authorList>
            <person name="Silby M.W."/>
            <person name="Cerdeno-Tarraga A.M."/>
            <person name="Vernikos G.S."/>
            <person name="Giddens S.R."/>
            <person name="Jackson R.W."/>
            <person name="Preston G.M."/>
            <person name="Zhang X.-X."/>
            <person name="Moon C.D."/>
            <person name="Gehrig S.M."/>
            <person name="Godfrey S.A.C."/>
            <person name="Knight C.G."/>
            <person name="Malone J.G."/>
            <person name="Robinson Z."/>
            <person name="Spiers A.J."/>
            <person name="Harris S."/>
            <person name="Challis G.L."/>
            <person name="Yaxley A.M."/>
            <person name="Harris D."/>
            <person name="Seeger K."/>
            <person name="Murphy L."/>
            <person name="Rutter S."/>
            <person name="Squares R."/>
            <person name="Quail M.A."/>
            <person name="Saunders E."/>
            <person name="Mavromatis K."/>
            <person name="Brettin T.S."/>
            <person name="Bentley S.D."/>
            <person name="Hothersall J."/>
            <person name="Stephens E."/>
            <person name="Thomas C.M."/>
            <person name="Parkhill J."/>
            <person name="Levy S.B."/>
            <person name="Rainey P.B."/>
            <person name="Thomson N.R."/>
        </authorList>
    </citation>
    <scope>NUCLEOTIDE SEQUENCE [LARGE SCALE GENOMIC DNA]</scope>
    <source>
        <strain>SBW25</strain>
    </source>
</reference>
<evidence type="ECO:0000255" key="1">
    <source>
        <dbReference type="HAMAP-Rule" id="MF_01350"/>
    </source>
</evidence>
<protein>
    <recommendedName>
        <fullName evidence="1">NADH-quinone oxidoreductase subunit H</fullName>
        <ecNumber evidence="1">7.1.1.-</ecNumber>
    </recommendedName>
    <alternativeName>
        <fullName evidence="1">NADH dehydrogenase I subunit H</fullName>
    </alternativeName>
    <alternativeName>
        <fullName evidence="1">NDH-1 subunit H</fullName>
    </alternativeName>
</protein>
<keyword id="KW-0997">Cell inner membrane</keyword>
<keyword id="KW-1003">Cell membrane</keyword>
<keyword id="KW-0472">Membrane</keyword>
<keyword id="KW-0520">NAD</keyword>
<keyword id="KW-0874">Quinone</keyword>
<keyword id="KW-1278">Translocase</keyword>
<keyword id="KW-0812">Transmembrane</keyword>
<keyword id="KW-1133">Transmembrane helix</keyword>
<keyword id="KW-0830">Ubiquinone</keyword>
<comment type="function">
    <text evidence="1">NDH-1 shuttles electrons from NADH, via FMN and iron-sulfur (Fe-S) centers, to quinones in the respiratory chain. The immediate electron acceptor for the enzyme in this species is believed to be ubiquinone. Couples the redox reaction to proton translocation (for every two electrons transferred, four hydrogen ions are translocated across the cytoplasmic membrane), and thus conserves the redox energy in a proton gradient. This subunit may bind ubiquinone.</text>
</comment>
<comment type="catalytic activity">
    <reaction evidence="1">
        <text>a quinone + NADH + 5 H(+)(in) = a quinol + NAD(+) + 4 H(+)(out)</text>
        <dbReference type="Rhea" id="RHEA:57888"/>
        <dbReference type="ChEBI" id="CHEBI:15378"/>
        <dbReference type="ChEBI" id="CHEBI:24646"/>
        <dbReference type="ChEBI" id="CHEBI:57540"/>
        <dbReference type="ChEBI" id="CHEBI:57945"/>
        <dbReference type="ChEBI" id="CHEBI:132124"/>
    </reaction>
</comment>
<comment type="subunit">
    <text evidence="1">NDH-1 is composed of 13 different subunits. Subunits NuoA, H, J, K, L, M, N constitute the membrane sector of the complex.</text>
</comment>
<comment type="subcellular location">
    <subcellularLocation>
        <location evidence="1">Cell inner membrane</location>
        <topology evidence="1">Multi-pass membrane protein</topology>
    </subcellularLocation>
</comment>
<comment type="similarity">
    <text evidence="1">Belongs to the complex I subunit 1 family.</text>
</comment>